<organism>
    <name type="scientific">Olimarabidopsis pumila</name>
    <name type="common">Dwarf rocket</name>
    <name type="synonym">Arabidopsis griffithiana</name>
    <dbReference type="NCBI Taxonomy" id="74718"/>
    <lineage>
        <taxon>Eukaryota</taxon>
        <taxon>Viridiplantae</taxon>
        <taxon>Streptophyta</taxon>
        <taxon>Embryophyta</taxon>
        <taxon>Tracheophyta</taxon>
        <taxon>Spermatophyta</taxon>
        <taxon>Magnoliopsida</taxon>
        <taxon>eudicotyledons</taxon>
        <taxon>Gunneridae</taxon>
        <taxon>Pentapetalae</taxon>
        <taxon>rosids</taxon>
        <taxon>malvids</taxon>
        <taxon>Brassicales</taxon>
        <taxon>Brassicaceae</taxon>
        <taxon>Alyssopsideae</taxon>
        <taxon>Olimarabidopsis</taxon>
    </lineage>
</organism>
<reference key="1">
    <citation type="submission" date="2007-03" db="EMBL/GenBank/DDBJ databases">
        <title>Sequence analysis of Arabidopsis pumila JS2 chloroplast DNA.</title>
        <authorList>
            <person name="Hosouchi T."/>
            <person name="Tsuruoka H."/>
            <person name="Kotani H."/>
        </authorList>
    </citation>
    <scope>NUCLEOTIDE SEQUENCE [LARGE SCALE GENOMIC DNA]</scope>
</reference>
<geneLocation type="chloroplast"/>
<proteinExistence type="inferred from homology"/>
<evidence type="ECO:0000255" key="1">
    <source>
        <dbReference type="HAMAP-Rule" id="MF_01391"/>
    </source>
</evidence>
<dbReference type="EMBL" id="AP009368">
    <property type="protein sequence ID" value="BAF49989.1"/>
    <property type="molecule type" value="Genomic_DNA"/>
</dbReference>
<dbReference type="RefSeq" id="YP_001123164.1">
    <property type="nucleotide sequence ID" value="NC_009267.1"/>
</dbReference>
<dbReference type="SMR" id="A4QJY1"/>
<dbReference type="GeneID" id="4962371"/>
<dbReference type="GO" id="GO:0009535">
    <property type="term" value="C:chloroplast thylakoid membrane"/>
    <property type="evidence" value="ECO:0007669"/>
    <property type="project" value="UniProtKB-SubCell"/>
</dbReference>
<dbReference type="GO" id="GO:0005886">
    <property type="term" value="C:plasma membrane"/>
    <property type="evidence" value="ECO:0007669"/>
    <property type="project" value="TreeGrafter"/>
</dbReference>
<dbReference type="GO" id="GO:0020037">
    <property type="term" value="F:heme binding"/>
    <property type="evidence" value="ECO:0007669"/>
    <property type="project" value="InterPro"/>
</dbReference>
<dbReference type="GO" id="GO:0017004">
    <property type="term" value="P:cytochrome complex assembly"/>
    <property type="evidence" value="ECO:0007669"/>
    <property type="project" value="UniProtKB-UniRule"/>
</dbReference>
<dbReference type="HAMAP" id="MF_01391">
    <property type="entry name" value="CytC_CcsA"/>
    <property type="match status" value="1"/>
</dbReference>
<dbReference type="InterPro" id="IPR002541">
    <property type="entry name" value="Cyt_c_assembly"/>
</dbReference>
<dbReference type="InterPro" id="IPR017562">
    <property type="entry name" value="Cyt_c_biogenesis_CcsA"/>
</dbReference>
<dbReference type="InterPro" id="IPR045062">
    <property type="entry name" value="Cyt_c_biogenesis_CcsA/CcmC"/>
</dbReference>
<dbReference type="NCBIfam" id="TIGR03144">
    <property type="entry name" value="cytochr_II_ccsB"/>
    <property type="match status" value="1"/>
</dbReference>
<dbReference type="PANTHER" id="PTHR30071:SF1">
    <property type="entry name" value="CYTOCHROME B_B6 PROTEIN-RELATED"/>
    <property type="match status" value="1"/>
</dbReference>
<dbReference type="PANTHER" id="PTHR30071">
    <property type="entry name" value="HEME EXPORTER PROTEIN C"/>
    <property type="match status" value="1"/>
</dbReference>
<dbReference type="Pfam" id="PF01578">
    <property type="entry name" value="Cytochrom_C_asm"/>
    <property type="match status" value="1"/>
</dbReference>
<name>CCSA_OLIPU</name>
<protein>
    <recommendedName>
        <fullName evidence="1">Cytochrome c biogenesis protein CcsA</fullName>
    </recommendedName>
</protein>
<comment type="function">
    <text evidence="1">Required during biogenesis of c-type cytochromes (cytochrome c6 and cytochrome f) at the step of heme attachment.</text>
</comment>
<comment type="subunit">
    <text evidence="1">May interact with Ccs1.</text>
</comment>
<comment type="subcellular location">
    <subcellularLocation>
        <location evidence="1">Plastid</location>
        <location evidence="1">Chloroplast thylakoid membrane</location>
        <topology evidence="1">Multi-pass membrane protein</topology>
    </subcellularLocation>
</comment>
<comment type="similarity">
    <text evidence="1">Belongs to the CcmF/CycK/Ccl1/NrfE/CcsA family.</text>
</comment>
<keyword id="KW-0150">Chloroplast</keyword>
<keyword id="KW-0201">Cytochrome c-type biogenesis</keyword>
<keyword id="KW-0472">Membrane</keyword>
<keyword id="KW-0934">Plastid</keyword>
<keyword id="KW-0793">Thylakoid</keyword>
<keyword id="KW-0812">Transmembrane</keyword>
<keyword id="KW-1133">Transmembrane helix</keyword>
<sequence length="328" mass="37620">MIFSILEHILTHISFSVVSIVLIIYFLTLLVNLDEIIGFFNSSDKGIIITFFGITGLLLTRWIFSGHFPLSNLYESLIFLSWAFSIIHMVSYFNKKQQNHLNAITAPSAIFIQGFATSGLLNKMPQSAILVPALQSQWLMMHVSMMILGYGALLCGSLLSIALLVITFRKVGPTFWKKNIKKNVLLNELFSFDVLYYINERNSILLQQNINFSFSRNYYRYQLIQQLDYWSFRIISLGFIFLTVGILSGAVWANETWGSYWNWDPKETWAFITWTIFAIYLHIKTNRNVRGINSAIVASIGFLLIWICYFGVNLLGIGLHSYGSFTSN</sequence>
<accession>A4QJY1</accession>
<feature type="chain" id="PRO_0000353780" description="Cytochrome c biogenesis protein CcsA">
    <location>
        <begin position="1"/>
        <end position="328"/>
    </location>
</feature>
<feature type="transmembrane region" description="Helical" evidence="1">
    <location>
        <begin position="13"/>
        <end position="33"/>
    </location>
</feature>
<feature type="transmembrane region" description="Helical" evidence="1">
    <location>
        <begin position="46"/>
        <end position="66"/>
    </location>
</feature>
<feature type="transmembrane region" description="Helical" evidence="1">
    <location>
        <begin position="73"/>
        <end position="93"/>
    </location>
</feature>
<feature type="transmembrane region" description="Helical" evidence="1">
    <location>
        <begin position="101"/>
        <end position="121"/>
    </location>
</feature>
<feature type="transmembrane region" description="Helical" evidence="1">
    <location>
        <begin position="146"/>
        <end position="166"/>
    </location>
</feature>
<feature type="transmembrane region" description="Helical" evidence="1">
    <location>
        <begin position="234"/>
        <end position="254"/>
    </location>
</feature>
<feature type="transmembrane region" description="Helical" evidence="1">
    <location>
        <begin position="263"/>
        <end position="283"/>
    </location>
</feature>
<feature type="transmembrane region" description="Helical" evidence="1">
    <location>
        <begin position="295"/>
        <end position="315"/>
    </location>
</feature>
<gene>
    <name evidence="1" type="primary">ccsA</name>
</gene>